<gene>
    <name evidence="8" type="primary">proRS</name>
    <name evidence="9" type="synonym">PRS</name>
    <name type="ORF">PF3D7_1213800</name>
    <name type="ORF">PFL0670c</name>
</gene>
<reference key="1">
    <citation type="journal article" date="2002" name="Nature">
        <title>Genome sequence of the human malaria parasite Plasmodium falciparum.</title>
        <authorList>
            <person name="Gardner M.J."/>
            <person name="Hall N."/>
            <person name="Fung E."/>
            <person name="White O."/>
            <person name="Berriman M."/>
            <person name="Hyman R.W."/>
            <person name="Carlton J.M."/>
            <person name="Pain A."/>
            <person name="Nelson K.E."/>
            <person name="Bowman S."/>
            <person name="Paulsen I.T."/>
            <person name="James K.D."/>
            <person name="Eisen J.A."/>
            <person name="Rutherford K.M."/>
            <person name="Salzberg S.L."/>
            <person name="Craig A."/>
            <person name="Kyes S."/>
            <person name="Chan M.-S."/>
            <person name="Nene V."/>
            <person name="Shallom S.J."/>
            <person name="Suh B."/>
            <person name="Peterson J."/>
            <person name="Angiuoli S."/>
            <person name="Pertea M."/>
            <person name="Allen J."/>
            <person name="Selengut J."/>
            <person name="Haft D."/>
            <person name="Mather M.W."/>
            <person name="Vaidya A.B."/>
            <person name="Martin D.M.A."/>
            <person name="Fairlamb A.H."/>
            <person name="Fraunholz M.J."/>
            <person name="Roos D.S."/>
            <person name="Ralph S.A."/>
            <person name="McFadden G.I."/>
            <person name="Cummings L.M."/>
            <person name="Subramanian G.M."/>
            <person name="Mungall C."/>
            <person name="Venter J.C."/>
            <person name="Carucci D.J."/>
            <person name="Hoffman S.L."/>
            <person name="Newbold C."/>
            <person name="Davis R.W."/>
            <person name="Fraser C.M."/>
            <person name="Barrell B.G."/>
        </authorList>
    </citation>
    <scope>NUCLEOTIDE SEQUENCE [LARGE SCALE GENOMIC DNA]</scope>
    <source>
        <strain>3D7</strain>
    </source>
</reference>
<reference key="2">
    <citation type="journal article" date="2003" name="Proc. Natl. Acad. Sci. U.S.A.">
        <title>Trans-editing of mischarged tRNAs.</title>
        <authorList>
            <person name="Ahel I."/>
            <person name="Korencic D."/>
            <person name="Ibba M."/>
            <person name="Soll D."/>
        </authorList>
    </citation>
    <scope>FUNCTION AS TRNA(PRO) EDITING PROTEIN</scope>
</reference>
<reference evidence="17" key="3">
    <citation type="journal article" date="2014" name="J. Struct. Funct. Genomics">
        <title>Structural and functional analysis of the anti-malarial drug target prolyl-tRNA synthetase.</title>
        <authorList>
            <person name="Jain V."/>
            <person name="Kikuchi H."/>
            <person name="Oshima Y."/>
            <person name="Sharma A."/>
            <person name="Yogavel M."/>
        </authorList>
    </citation>
    <scope>X-RAY CRYSTALLOGRAPHY (3.00 ANGSTROMS) OF 254-746</scope>
    <scope>SUBUNIT</scope>
    <scope>SUBCELLULAR LOCATION</scope>
    <scope>DEVELOPMENTAL STAGE</scope>
</reference>
<reference evidence="15" key="4">
    <citation type="submission" date="2014-01" db="PDB data bank">
        <title>Crystal Structure of Prolyl-tRNA synthetase (ProRS, Proline--tRNA ligase)from Plasmodium falciparum in complex with Halofuginone and AMPPNP.</title>
        <authorList>
            <person name="Dranow D.M."/>
            <person name="Edwards T.E."/>
            <person name="Lorimer D."/>
        </authorList>
    </citation>
    <scope>X-RAY CRYSTALLOGRAPHY (2.90 ANGSTROMS) OF 249-746 IN COMPLEX WITH ATP ANALOG</scope>
</reference>
<reference evidence="19" key="5">
    <citation type="journal article" date="2015" name="Structure">
        <title>Structure of Prolyl-tRNA Synthetase-Halofuginone Complex Provides Basis for Development of Drugs against Malaria and Toxoplasmosis.</title>
        <authorList>
            <person name="Jain V."/>
            <person name="Yogavel M."/>
            <person name="Oshima Y."/>
            <person name="Kikuchi H."/>
            <person name="Touquet B."/>
            <person name="Hakimi M.A."/>
            <person name="Sharma A."/>
        </authorList>
    </citation>
    <scope>X-RAY CRYSTALLOGRAPHY (2.30 ANGSTROMS) OF 254-746 IN COMPLEX WITH ATP ANALOG AND INHIBITOR</scope>
    <scope>FUNCTION</scope>
    <scope>CATALYTIC ACTIVITY</scope>
    <scope>ACTIVITY REGULATION</scope>
    <scope>SUBUNIT</scope>
</reference>
<reference evidence="14 16 18 20" key="6">
    <citation type="journal article" date="2017" name="ACS Infect. Dis.">
        <title>Biochemical and Structural Characterization of Selective Allosteric Inhibitors of the Plasmodium falciparum Drug Target, Prolyl-tRNA-synthetase.</title>
        <authorList>
            <person name="Hewitt S.N."/>
            <person name="Dranow D.M."/>
            <person name="Horst B.G."/>
            <person name="Abendroth J.A."/>
            <person name="Forte B."/>
            <person name="Hallyburton I."/>
            <person name="Jansen C."/>
            <person name="Baragana B."/>
            <person name="Choi R."/>
            <person name="Rivas K.L."/>
            <person name="Hulverson M.A."/>
            <person name="Dumais M."/>
            <person name="Edwards T.E."/>
            <person name="Lorimer D.D."/>
            <person name="Fairlamb A.H."/>
            <person name="Gray D.W."/>
            <person name="Read K.D."/>
            <person name="Lehane A.M."/>
            <person name="Kirk K."/>
            <person name="Myler P.J."/>
            <person name="Wernimont A."/>
            <person name="Walpole C."/>
            <person name="Stacy R."/>
            <person name="Barrett L.K."/>
            <person name="Gilbert I.H."/>
            <person name="Van Voorhis W.C."/>
        </authorList>
    </citation>
    <scope>X-RAY CRYSTALLOGRAPHY (1.65 ANGSTROMS) OF 249-746 IN APO FORM AND IN COMPLEX WITH ATP ANALOG AND INHIBITOR</scope>
    <scope>FUNCTION</scope>
    <scope>CATALYTIC ACTIVITY</scope>
    <scope>ACTIVITY REGULATION</scope>
</reference>
<reference evidence="21" key="7">
    <citation type="submission" date="2019-10" db="PDB data bank">
        <title>Crystal Structure of Prolyl-tRNA synthetase (ProRS, Proline--tRNA ligase) from Plasmodium falciparum in complex with NCP-26 and L-Proline.</title>
        <authorList>
            <person name="Johansson C."/>
            <person name="Wang J."/>
            <person name="Tye M."/>
            <person name="Payne N.C."/>
            <person name="Mazitschek R."/>
            <person name="Thompson A."/>
            <person name="Arrowsmith C.H."/>
            <person name="Bountra C."/>
            <person name="Edwards A."/>
            <person name="Oppermann U.C.T."/>
        </authorList>
    </citation>
    <scope>X-RAY CRYSTALLOGRAPHY (1.79 ANGSTROMS) OF 249-746 IN COMPLEX WITH L-PROLINE</scope>
</reference>
<accession>Q8I5R7</accession>
<accession>A0A144A0G8</accession>
<name>SYP_PLAF7</name>
<organism>
    <name type="scientific">Plasmodium falciparum (isolate 3D7)</name>
    <dbReference type="NCBI Taxonomy" id="36329"/>
    <lineage>
        <taxon>Eukaryota</taxon>
        <taxon>Sar</taxon>
        <taxon>Alveolata</taxon>
        <taxon>Apicomplexa</taxon>
        <taxon>Aconoidasida</taxon>
        <taxon>Haemosporida</taxon>
        <taxon>Plasmodiidae</taxon>
        <taxon>Plasmodium</taxon>
        <taxon>Plasmodium (Laverania)</taxon>
    </lineage>
</organism>
<evidence type="ECO:0000256" key="1">
    <source>
        <dbReference type="SAM" id="MobiDB-lite"/>
    </source>
</evidence>
<evidence type="ECO:0000269" key="2">
    <source>
    </source>
</evidence>
<evidence type="ECO:0000269" key="3">
    <source>
    </source>
</evidence>
<evidence type="ECO:0000269" key="4">
    <source>
    </source>
</evidence>
<evidence type="ECO:0000269" key="5">
    <source>
    </source>
</evidence>
<evidence type="ECO:0000269" key="6">
    <source ref="4"/>
</evidence>
<evidence type="ECO:0000269" key="7">
    <source ref="7"/>
</evidence>
<evidence type="ECO:0000303" key="8">
    <source>
    </source>
</evidence>
<evidence type="ECO:0000303" key="9">
    <source>
    </source>
</evidence>
<evidence type="ECO:0000305" key="10"/>
<evidence type="ECO:0000305" key="11">
    <source>
    </source>
</evidence>
<evidence type="ECO:0000305" key="12">
    <source>
    </source>
</evidence>
<evidence type="ECO:0000305" key="13">
    <source>
    </source>
</evidence>
<evidence type="ECO:0007744" key="14">
    <source>
        <dbReference type="PDB" id="4NCX"/>
    </source>
</evidence>
<evidence type="ECO:0007744" key="15">
    <source>
        <dbReference type="PDB" id="4OLF"/>
    </source>
</evidence>
<evidence type="ECO:0007744" key="16">
    <source>
        <dbReference type="PDB" id="4Q15"/>
    </source>
</evidence>
<evidence type="ECO:0007744" key="17">
    <source>
        <dbReference type="PDB" id="4TWA"/>
    </source>
</evidence>
<evidence type="ECO:0007744" key="18">
    <source>
        <dbReference type="PDB" id="4WI1"/>
    </source>
</evidence>
<evidence type="ECO:0007744" key="19">
    <source>
        <dbReference type="PDB" id="4YDQ"/>
    </source>
</evidence>
<evidence type="ECO:0007744" key="20">
    <source>
        <dbReference type="PDB" id="5IFU"/>
    </source>
</evidence>
<evidence type="ECO:0007744" key="21">
    <source>
        <dbReference type="PDB" id="6T7K"/>
    </source>
</evidence>
<evidence type="ECO:0007829" key="22">
    <source>
        <dbReference type="PDB" id="4Q15"/>
    </source>
</evidence>
<evidence type="ECO:0007829" key="23">
    <source>
        <dbReference type="PDB" id="4WI1"/>
    </source>
</evidence>
<evidence type="ECO:0007829" key="24">
    <source>
        <dbReference type="PDB" id="5IFU"/>
    </source>
</evidence>
<evidence type="ECO:0007829" key="25">
    <source>
        <dbReference type="PDB" id="6T7K"/>
    </source>
</evidence>
<evidence type="ECO:0007829" key="26">
    <source>
        <dbReference type="PDB" id="7F96"/>
    </source>
</evidence>
<comment type="function">
    <text evidence="2 4 5">Catalyzes the attachment of proline to tRNA(Pro) in a two-step reaction: proline is first activated by ATP to form Pro-AMP and then transferred to the acceptor end of tRNA(Pro) (PubMed:25817387, PubMed:27798837). Functions in trans to edit the amino acid moiety from incorrectly charged Ala-tRNA(Pro) (PubMed:14663147). Has no activity on correctly charged Pro-tRNA(Pro) or Ala-tRNA(Ala) (PubMed:14663147).</text>
</comment>
<comment type="catalytic activity">
    <reaction evidence="4 5">
        <text>tRNA(Pro) + L-proline + ATP = L-prolyl-tRNA(Pro) + AMP + diphosphate</text>
        <dbReference type="Rhea" id="RHEA:14305"/>
        <dbReference type="Rhea" id="RHEA-COMP:9700"/>
        <dbReference type="Rhea" id="RHEA-COMP:9702"/>
        <dbReference type="ChEBI" id="CHEBI:30616"/>
        <dbReference type="ChEBI" id="CHEBI:33019"/>
        <dbReference type="ChEBI" id="CHEBI:60039"/>
        <dbReference type="ChEBI" id="CHEBI:78442"/>
        <dbReference type="ChEBI" id="CHEBI:78532"/>
        <dbReference type="ChEBI" id="CHEBI:456215"/>
        <dbReference type="EC" id="6.1.1.15"/>
    </reaction>
</comment>
<comment type="activity regulation">
    <text evidence="4 5">Inhibited by the quinazolinone-based compound febrifugine from the Chinese plant Dichroa febrifuga which is used to treat malaria-associated fever (PubMed:25817387, PubMed:27798837). Also inhibited by febrifugine derivatives such as halofuginone (PubMed:25817387, PubMed:27798837).</text>
</comment>
<comment type="subunit">
    <text evidence="12 13">Homodimer.</text>
</comment>
<comment type="subcellular location">
    <subcellularLocation>
        <location evidence="3">Cytoplasm</location>
    </subcellularLocation>
</comment>
<comment type="developmental stage">
    <text evidence="3">Expressed during the asexual blood stage including at the ring stage and in trophozoites and schizonts (at protein level).</text>
</comment>
<comment type="domain">
    <text evidence="2 11">Consists of four domains: the N-terminal editing domain, the N-terminal catalytic domain, the anticodon-binding domain and the C-terminal extension (Probable). The first domain (about residues 1-163) is required for editing of incorrectly charged tRNA (PubMed:14663147). When it is deleted the enzyme shows pronounced misacylation of tRNA(Pro) with alanine (PubMed:14663147).</text>
</comment>
<comment type="similarity">
    <text evidence="10">Belongs to the class-II aminoacyl-tRNA synthetase family. ProS type 3 subfamily.</text>
</comment>
<protein>
    <recommendedName>
        <fullName>Proline--tRNA ligase</fullName>
        <shortName evidence="9">PfPRS</shortName>
        <ecNumber evidence="4 5">6.1.1.15</ecNumber>
    </recommendedName>
    <alternativeName>
        <fullName evidence="8">Prolyl-tRNA synthetase</fullName>
        <shortName evidence="8">PfProRS</shortName>
    </alternativeName>
</protein>
<proteinExistence type="evidence at protein level"/>
<feature type="chain" id="PRO_0000392534" description="Proline--tRNA ligase">
    <location>
        <begin position="1"/>
        <end position="746"/>
    </location>
</feature>
<feature type="region of interest" description="Required for editing of incorrectly charged tRNA" evidence="2">
    <location>
        <begin position="1"/>
        <end position="223"/>
    </location>
</feature>
<feature type="region of interest" description="Disordered" evidence="1">
    <location>
        <begin position="181"/>
        <end position="226"/>
    </location>
</feature>
<feature type="compositionally biased region" description="Basic and acidic residues" evidence="1">
    <location>
        <begin position="181"/>
        <end position="201"/>
    </location>
</feature>
<feature type="compositionally biased region" description="Low complexity" evidence="1">
    <location>
        <begin position="204"/>
        <end position="224"/>
    </location>
</feature>
<feature type="binding site" evidence="4 5 6 15 16 19">
    <location>
        <begin position="390"/>
        <end position="394"/>
    </location>
    <ligand>
        <name>ATP</name>
        <dbReference type="ChEBI" id="CHEBI:30616"/>
    </ligand>
</feature>
<feature type="binding site" evidence="7 21">
    <location>
        <position position="390"/>
    </location>
    <ligand>
        <name>L-proline</name>
        <dbReference type="ChEBI" id="CHEBI:60039"/>
    </ligand>
</feature>
<feature type="binding site" evidence="4 5 6 15 16 19">
    <location>
        <begin position="401"/>
        <end position="405"/>
    </location>
    <ligand>
        <name>ATP</name>
        <dbReference type="ChEBI" id="CHEBI:30616"/>
    </ligand>
</feature>
<feature type="binding site" evidence="4 5 6 15 16 19">
    <location>
        <begin position="475"/>
        <end position="477"/>
    </location>
    <ligand>
        <name>ATP</name>
        <dbReference type="ChEBI" id="CHEBI:30616"/>
    </ligand>
</feature>
<feature type="binding site" evidence="7 21">
    <location>
        <position position="480"/>
    </location>
    <ligand>
        <name>L-proline</name>
        <dbReference type="ChEBI" id="CHEBI:60039"/>
    </ligand>
</feature>
<feature type="binding site" evidence="4 5 6 15 16 19">
    <location>
        <begin position="512"/>
        <end position="514"/>
    </location>
    <ligand>
        <name>ATP</name>
        <dbReference type="ChEBI" id="CHEBI:30616"/>
    </ligand>
</feature>
<feature type="helix" evidence="23">
    <location>
        <begin position="250"/>
        <end position="252"/>
    </location>
</feature>
<feature type="turn" evidence="23">
    <location>
        <begin position="258"/>
        <end position="260"/>
    </location>
</feature>
<feature type="helix" evidence="23">
    <location>
        <begin position="262"/>
        <end position="272"/>
    </location>
</feature>
<feature type="strand" evidence="23">
    <location>
        <begin position="275"/>
        <end position="278"/>
    </location>
</feature>
<feature type="strand" evidence="23">
    <location>
        <begin position="285"/>
        <end position="287"/>
    </location>
</feature>
<feature type="helix" evidence="23">
    <location>
        <begin position="289"/>
        <end position="308"/>
    </location>
</feature>
<feature type="strand" evidence="22">
    <location>
        <begin position="312"/>
        <end position="315"/>
    </location>
</feature>
<feature type="strand" evidence="23">
    <location>
        <begin position="318"/>
        <end position="320"/>
    </location>
</feature>
<feature type="helix" evidence="25">
    <location>
        <begin position="322"/>
        <end position="325"/>
    </location>
</feature>
<feature type="helix" evidence="25">
    <location>
        <begin position="329"/>
        <end position="335"/>
    </location>
</feature>
<feature type="helix" evidence="25">
    <location>
        <begin position="336"/>
        <end position="338"/>
    </location>
</feature>
<feature type="strand" evidence="25">
    <location>
        <begin position="341"/>
        <end position="345"/>
    </location>
</feature>
<feature type="strand" evidence="25">
    <location>
        <begin position="348"/>
        <end position="356"/>
    </location>
</feature>
<feature type="strand" evidence="25">
    <location>
        <begin position="358"/>
        <end position="360"/>
    </location>
</feature>
<feature type="strand" evidence="23">
    <location>
        <begin position="361"/>
        <end position="363"/>
    </location>
</feature>
<feature type="helix" evidence="23">
    <location>
        <begin position="365"/>
        <end position="370"/>
    </location>
</feature>
<feature type="helix" evidence="23">
    <location>
        <begin position="375"/>
        <end position="377"/>
    </location>
</feature>
<feature type="strand" evidence="23">
    <location>
        <begin position="380"/>
        <end position="387"/>
    </location>
</feature>
<feature type="strand" evidence="23">
    <location>
        <begin position="390"/>
        <end position="392"/>
    </location>
</feature>
<feature type="turn" evidence="25">
    <location>
        <begin position="398"/>
        <end position="400"/>
    </location>
</feature>
<feature type="strand" evidence="23">
    <location>
        <begin position="406"/>
        <end position="416"/>
    </location>
</feature>
<feature type="helix" evidence="23">
    <location>
        <begin position="417"/>
        <end position="437"/>
    </location>
</feature>
<feature type="strand" evidence="23">
    <location>
        <begin position="444"/>
        <end position="447"/>
    </location>
</feature>
<feature type="turn" evidence="23">
    <location>
        <begin position="450"/>
        <end position="452"/>
    </location>
</feature>
<feature type="strand" evidence="23">
    <location>
        <begin position="458"/>
        <end position="467"/>
    </location>
</feature>
<feature type="turn" evidence="23">
    <location>
        <begin position="468"/>
        <end position="471"/>
    </location>
</feature>
<feature type="strand" evidence="23">
    <location>
        <begin position="472"/>
        <end position="483"/>
    </location>
</feature>
<feature type="helix" evidence="23">
    <location>
        <begin position="485"/>
        <end position="490"/>
    </location>
</feature>
<feature type="strand" evidence="23">
    <location>
        <begin position="493"/>
        <end position="495"/>
    </location>
</feature>
<feature type="strand" evidence="23">
    <location>
        <begin position="501"/>
        <end position="503"/>
    </location>
</feature>
<feature type="strand" evidence="23">
    <location>
        <begin position="505"/>
        <end position="512"/>
    </location>
</feature>
<feature type="helix" evidence="23">
    <location>
        <begin position="514"/>
        <end position="523"/>
    </location>
</feature>
<feature type="strand" evidence="25">
    <location>
        <begin position="528"/>
        <end position="530"/>
    </location>
</feature>
<feature type="helix" evidence="23">
    <location>
        <begin position="533"/>
        <end position="535"/>
    </location>
</feature>
<feature type="strand" evidence="23">
    <location>
        <begin position="539"/>
        <end position="544"/>
    </location>
</feature>
<feature type="helix" evidence="23">
    <location>
        <begin position="549"/>
        <end position="568"/>
    </location>
</feature>
<feature type="strand" evidence="23">
    <location>
        <begin position="573"/>
        <end position="575"/>
    </location>
</feature>
<feature type="strand" evidence="26">
    <location>
        <begin position="579"/>
        <end position="581"/>
    </location>
</feature>
<feature type="helix" evidence="23">
    <location>
        <begin position="583"/>
        <end position="592"/>
    </location>
</feature>
<feature type="strand" evidence="23">
    <location>
        <begin position="596"/>
        <end position="601"/>
    </location>
</feature>
<feature type="helix" evidence="23">
    <location>
        <begin position="603"/>
        <end position="608"/>
    </location>
</feature>
<feature type="strand" evidence="23">
    <location>
        <begin position="610"/>
        <end position="615"/>
    </location>
</feature>
<feature type="turn" evidence="23">
    <location>
        <begin position="616"/>
        <end position="618"/>
    </location>
</feature>
<feature type="strand" evidence="23">
    <location>
        <begin position="621"/>
        <end position="625"/>
    </location>
</feature>
<feature type="helix" evidence="23">
    <location>
        <begin position="626"/>
        <end position="628"/>
    </location>
</feature>
<feature type="helix" evidence="23">
    <location>
        <begin position="629"/>
        <end position="654"/>
    </location>
</feature>
<feature type="strand" evidence="23">
    <location>
        <begin position="656"/>
        <end position="658"/>
    </location>
</feature>
<feature type="helix" evidence="23">
    <location>
        <begin position="662"/>
        <end position="664"/>
    </location>
</feature>
<feature type="helix" evidence="23">
    <location>
        <begin position="665"/>
        <end position="670"/>
    </location>
</feature>
<feature type="strand" evidence="23">
    <location>
        <begin position="674"/>
        <end position="679"/>
    </location>
</feature>
<feature type="helix" evidence="23">
    <location>
        <begin position="684"/>
        <end position="695"/>
    </location>
</feature>
<feature type="strand" evidence="25">
    <location>
        <begin position="705"/>
        <end position="707"/>
    </location>
</feature>
<feature type="strand" evidence="23">
    <location>
        <begin position="712"/>
        <end position="719"/>
    </location>
</feature>
<feature type="turn" evidence="23">
    <location>
        <begin position="730"/>
        <end position="732"/>
    </location>
</feature>
<feature type="strand" evidence="24">
    <location>
        <begin position="733"/>
        <end position="735"/>
    </location>
</feature>
<feature type="strand" evidence="23">
    <location>
        <begin position="738"/>
        <end position="743"/>
    </location>
</feature>
<sequence length="746" mass="86647">MNNNTNGEIIIPQEYLEKSECLFKELKELNINFKEVKHGLAATIKDLLEMNLENSTNILKNLFLKDKKKNYFLICTLNNKTVDLKNLSNILKTNNLRFVDENNLNNILNIQPGCLSPLAIKNDKENIVKLYFDEEIKNMQEVIIHPLHNYSSLYIKTQDVIKFCESFNHAPEYVQIKEDTTSKARVDKKEDVQEEMAKNEELQNNNNNNKNNSNSNNNNNNNNNHIKDTILKGKLLSNNEVEDNKSKDSNILGITSKKIENFSDWYTQVIVKSELIEYYDISGCYILRPAAYYIWECVQAFFNKEIKKLNVENSYFPLFVTKNKLEKEKNHIEGFSPEVAWVTKYGDSNLPEEIAIRPTSETIMYSVFPKWIRSYRDLPLKLNQWNTVVRWEFKQPTPFIRTREFLWQEGHTAHKNEEEAVKLVFDILDLYRRWYEEYLAVPIIKGIKSEGEKFGGANFTSTAEAFISENGRAIQAATSHYLGTNFAKMFKIEFEDENEVKQYVHQTSWGCTTRSIGIMIMTHGDDKGLVLPPNVSKYKVVIVPIFYKTTDENAIHSYCKDIEKILKNAQINCVYDDRASYSPGYKFNHWELRGIPIRIEVGPKDLQNNSCVIVRRDNNEKCNVKKESVLLETQQMLVDIHKNLFLKAKKKLDDSIVQVTSFSEVMNALNKKKMVLAPWCEDIATEEEIKKETQRLSLNQTNSETTLSGAMKPLCIPLDQPPMPPNMKCFWSGKPAKRWCLFGRSY</sequence>
<dbReference type="EC" id="6.1.1.15" evidence="4 5"/>
<dbReference type="EMBL" id="LN999947">
    <property type="protein sequence ID" value="CZT99299.1"/>
    <property type="molecule type" value="Genomic_DNA"/>
</dbReference>
<dbReference type="RefSeq" id="XP_001350543.1">
    <property type="nucleotide sequence ID" value="XM_001350507.1"/>
</dbReference>
<dbReference type="PDB" id="4NCX">
    <property type="method" value="X-ray"/>
    <property type="resolution" value="1.85 A"/>
    <property type="chains" value="A/B=249-746"/>
</dbReference>
<dbReference type="PDB" id="4OLF">
    <property type="method" value="X-ray"/>
    <property type="resolution" value="2.90 A"/>
    <property type="chains" value="A=249-746"/>
</dbReference>
<dbReference type="PDB" id="4Q15">
    <property type="method" value="X-ray"/>
    <property type="resolution" value="2.35 A"/>
    <property type="chains" value="A/B=249-746"/>
</dbReference>
<dbReference type="PDB" id="4TWA">
    <property type="method" value="X-ray"/>
    <property type="resolution" value="3.00 A"/>
    <property type="chains" value="A/B=254-746"/>
</dbReference>
<dbReference type="PDB" id="4WI1">
    <property type="method" value="X-ray"/>
    <property type="resolution" value="1.65 A"/>
    <property type="chains" value="A/B=249-746"/>
</dbReference>
<dbReference type="PDB" id="4YDQ">
    <property type="method" value="X-ray"/>
    <property type="resolution" value="2.30 A"/>
    <property type="chains" value="A/B=254-746"/>
</dbReference>
<dbReference type="PDB" id="5IFU">
    <property type="method" value="X-ray"/>
    <property type="resolution" value="2.45 A"/>
    <property type="chains" value="A/B=249-746"/>
</dbReference>
<dbReference type="PDB" id="6T7K">
    <property type="method" value="X-ray"/>
    <property type="resolution" value="1.79 A"/>
    <property type="chains" value="A=249-746"/>
</dbReference>
<dbReference type="PDB" id="7F96">
    <property type="method" value="X-ray"/>
    <property type="resolution" value="2.58 A"/>
    <property type="chains" value="A=254-746"/>
</dbReference>
<dbReference type="PDB" id="7F97">
    <property type="method" value="X-ray"/>
    <property type="resolution" value="2.39 A"/>
    <property type="chains" value="A/B/C/D=254-746"/>
</dbReference>
<dbReference type="PDB" id="7QB7">
    <property type="method" value="X-ray"/>
    <property type="resolution" value="1.90 A"/>
    <property type="chains" value="A=249-746"/>
</dbReference>
<dbReference type="PDB" id="7QC1">
    <property type="method" value="X-ray"/>
    <property type="resolution" value="2.51 A"/>
    <property type="chains" value="A/D/I=249-746"/>
</dbReference>
<dbReference type="PDB" id="7QC2">
    <property type="method" value="X-ray"/>
    <property type="resolution" value="2.28 A"/>
    <property type="chains" value="A=249-746"/>
</dbReference>
<dbReference type="PDB" id="7V9D">
    <property type="method" value="X-ray"/>
    <property type="resolution" value="1.94 A"/>
    <property type="chains" value="A=254-746"/>
</dbReference>
<dbReference type="PDBsum" id="4NCX"/>
<dbReference type="PDBsum" id="4OLF"/>
<dbReference type="PDBsum" id="4Q15"/>
<dbReference type="PDBsum" id="4TWA"/>
<dbReference type="PDBsum" id="4WI1"/>
<dbReference type="PDBsum" id="4YDQ"/>
<dbReference type="PDBsum" id="5IFU"/>
<dbReference type="PDBsum" id="6T7K"/>
<dbReference type="PDBsum" id="7F96"/>
<dbReference type="PDBsum" id="7F97"/>
<dbReference type="PDBsum" id="7QB7"/>
<dbReference type="PDBsum" id="7QC1"/>
<dbReference type="PDBsum" id="7QC2"/>
<dbReference type="PDBsum" id="7V9D"/>
<dbReference type="SMR" id="Q8I5R7"/>
<dbReference type="DIP" id="DIP-61496N"/>
<dbReference type="FunCoup" id="Q8I5R7">
    <property type="interactions" value="204"/>
</dbReference>
<dbReference type="STRING" id="36329.Q8I5R7"/>
<dbReference type="BindingDB" id="Q8I5R7"/>
<dbReference type="ChEMBL" id="CHEMBL3301560"/>
<dbReference type="DrugCentral" id="Q8I5R7"/>
<dbReference type="GuidetoPHARMACOLOGY" id="3056"/>
<dbReference type="PaxDb" id="5833-PFL0670c"/>
<dbReference type="EnsemblProtists" id="CZT99299">
    <property type="protein sequence ID" value="CZT99299"/>
    <property type="gene ID" value="PF3D7_1213800"/>
</dbReference>
<dbReference type="GeneID" id="811187"/>
<dbReference type="KEGG" id="pfa:PF3D7_1213800"/>
<dbReference type="VEuPathDB" id="PlasmoDB:PF3D7_1213800"/>
<dbReference type="HOGENOM" id="CLU_001882_4_1_1"/>
<dbReference type="InParanoid" id="Q8I5R7"/>
<dbReference type="OMA" id="EVYWVTH"/>
<dbReference type="OrthoDB" id="1350766at2759"/>
<dbReference type="PhylomeDB" id="Q8I5R7"/>
<dbReference type="BRENDA" id="6.1.1.15">
    <property type="organism ID" value="4889"/>
</dbReference>
<dbReference type="EvolutionaryTrace" id="Q8I5R7"/>
<dbReference type="Proteomes" id="UP000001450">
    <property type="component" value="Chromosome 12"/>
</dbReference>
<dbReference type="GO" id="GO:0017101">
    <property type="term" value="C:aminoacyl-tRNA synthetase multienzyme complex"/>
    <property type="evidence" value="ECO:0000318"/>
    <property type="project" value="GO_Central"/>
</dbReference>
<dbReference type="GO" id="GO:0005737">
    <property type="term" value="C:cytoplasm"/>
    <property type="evidence" value="ECO:0000314"/>
    <property type="project" value="GeneDB"/>
</dbReference>
<dbReference type="GO" id="GO:0043906">
    <property type="term" value="F:Ala-tRNA(Pro) deacylase activity"/>
    <property type="evidence" value="ECO:0000314"/>
    <property type="project" value="UniProtKB"/>
</dbReference>
<dbReference type="GO" id="GO:0005524">
    <property type="term" value="F:ATP binding"/>
    <property type="evidence" value="ECO:0007669"/>
    <property type="project" value="UniProtKB-KW"/>
</dbReference>
<dbReference type="GO" id="GO:0004827">
    <property type="term" value="F:proline-tRNA ligase activity"/>
    <property type="evidence" value="ECO:0000250"/>
    <property type="project" value="GeneDB"/>
</dbReference>
<dbReference type="GO" id="GO:0006433">
    <property type="term" value="P:prolyl-tRNA aminoacylation"/>
    <property type="evidence" value="ECO:0000318"/>
    <property type="project" value="GO_Central"/>
</dbReference>
<dbReference type="GO" id="GO:0006418">
    <property type="term" value="P:tRNA aminoacylation for protein translation"/>
    <property type="evidence" value="ECO:0000250"/>
    <property type="project" value="GeneDB"/>
</dbReference>
<dbReference type="CDD" id="cd04335">
    <property type="entry name" value="PrdX_deacylase"/>
    <property type="match status" value="1"/>
</dbReference>
<dbReference type="CDD" id="cd00862">
    <property type="entry name" value="ProRS_anticodon_zinc"/>
    <property type="match status" value="1"/>
</dbReference>
<dbReference type="CDD" id="cd00778">
    <property type="entry name" value="ProRS_core_arch_euk"/>
    <property type="match status" value="1"/>
</dbReference>
<dbReference type="FunFam" id="3.30.110.30:FF:000001">
    <property type="entry name" value="Bifunctional glutamate/proline--tRNA ligase"/>
    <property type="match status" value="1"/>
</dbReference>
<dbReference type="FunFam" id="3.30.930.10:FF:000007">
    <property type="entry name" value="Bifunctional glutamate/proline--tRNA ligase"/>
    <property type="match status" value="1"/>
</dbReference>
<dbReference type="FunFam" id="3.40.50.800:FF:000005">
    <property type="entry name" value="bifunctional glutamate/proline--tRNA ligase"/>
    <property type="match status" value="1"/>
</dbReference>
<dbReference type="FunFam" id="3.90.960.10:FF:000007">
    <property type="entry name" value="Prolyl-tRNA synthetase"/>
    <property type="match status" value="1"/>
</dbReference>
<dbReference type="Gene3D" id="3.40.50.800">
    <property type="entry name" value="Anticodon-binding domain"/>
    <property type="match status" value="1"/>
</dbReference>
<dbReference type="Gene3D" id="3.30.930.10">
    <property type="entry name" value="Bira Bifunctional Protein, Domain 2"/>
    <property type="match status" value="1"/>
</dbReference>
<dbReference type="Gene3D" id="3.30.110.30">
    <property type="entry name" value="C-terminal domain of ProRS"/>
    <property type="match status" value="1"/>
</dbReference>
<dbReference type="Gene3D" id="3.90.960.10">
    <property type="entry name" value="YbaK/aminoacyl-tRNA synthetase-associated domain"/>
    <property type="match status" value="1"/>
</dbReference>
<dbReference type="HAMAP" id="MF_01571">
    <property type="entry name" value="Pro_tRNA_synth_type3"/>
    <property type="match status" value="1"/>
</dbReference>
<dbReference type="InterPro" id="IPR002314">
    <property type="entry name" value="aa-tRNA-synt_IIb"/>
</dbReference>
<dbReference type="InterPro" id="IPR006195">
    <property type="entry name" value="aa-tRNA-synth_II"/>
</dbReference>
<dbReference type="InterPro" id="IPR045864">
    <property type="entry name" value="aa-tRNA-synth_II/BPL/LPL"/>
</dbReference>
<dbReference type="InterPro" id="IPR004154">
    <property type="entry name" value="Anticodon-bd"/>
</dbReference>
<dbReference type="InterPro" id="IPR036621">
    <property type="entry name" value="Anticodon-bd_dom_sf"/>
</dbReference>
<dbReference type="InterPro" id="IPR002316">
    <property type="entry name" value="Pro-tRNA-ligase_IIa"/>
</dbReference>
<dbReference type="InterPro" id="IPR004499">
    <property type="entry name" value="Pro-tRNA-ligase_IIa_arc-type"/>
</dbReference>
<dbReference type="InterPro" id="IPR016061">
    <property type="entry name" value="Pro-tRNA_ligase_II_C"/>
</dbReference>
<dbReference type="InterPro" id="IPR017449">
    <property type="entry name" value="Pro-tRNA_synth_II"/>
</dbReference>
<dbReference type="InterPro" id="IPR033721">
    <property type="entry name" value="ProRS_core_arch_euk"/>
</dbReference>
<dbReference type="InterPro" id="IPR036754">
    <property type="entry name" value="YbaK/aa-tRNA-synt-asso_dom_sf"/>
</dbReference>
<dbReference type="InterPro" id="IPR007214">
    <property type="entry name" value="YbaK/aa-tRNA-synth-assoc-dom"/>
</dbReference>
<dbReference type="NCBIfam" id="TIGR00408">
    <property type="entry name" value="proS_fam_I"/>
    <property type="match status" value="1"/>
</dbReference>
<dbReference type="PANTHER" id="PTHR43382:SF2">
    <property type="entry name" value="BIFUNCTIONAL GLUTAMATE_PROLINE--TRNA LIGASE"/>
    <property type="match status" value="1"/>
</dbReference>
<dbReference type="PANTHER" id="PTHR43382">
    <property type="entry name" value="PROLYL-TRNA SYNTHETASE"/>
    <property type="match status" value="1"/>
</dbReference>
<dbReference type="Pfam" id="PF03129">
    <property type="entry name" value="HGTP_anticodon"/>
    <property type="match status" value="1"/>
</dbReference>
<dbReference type="Pfam" id="PF09180">
    <property type="entry name" value="ProRS-C_1"/>
    <property type="match status" value="1"/>
</dbReference>
<dbReference type="Pfam" id="PF00587">
    <property type="entry name" value="tRNA-synt_2b"/>
    <property type="match status" value="1"/>
</dbReference>
<dbReference type="Pfam" id="PF04073">
    <property type="entry name" value="tRNA_edit"/>
    <property type="match status" value="1"/>
</dbReference>
<dbReference type="PRINTS" id="PR01046">
    <property type="entry name" value="TRNASYNTHPRO"/>
</dbReference>
<dbReference type="SMART" id="SM00946">
    <property type="entry name" value="ProRS-C_1"/>
    <property type="match status" value="1"/>
</dbReference>
<dbReference type="SUPFAM" id="SSF64586">
    <property type="entry name" value="C-terminal domain of ProRS"/>
    <property type="match status" value="1"/>
</dbReference>
<dbReference type="SUPFAM" id="SSF52954">
    <property type="entry name" value="Class II aaRS ABD-related"/>
    <property type="match status" value="1"/>
</dbReference>
<dbReference type="SUPFAM" id="SSF55681">
    <property type="entry name" value="Class II aaRS and biotin synthetases"/>
    <property type="match status" value="1"/>
</dbReference>
<dbReference type="SUPFAM" id="SSF55826">
    <property type="entry name" value="YbaK/ProRS associated domain"/>
    <property type="match status" value="1"/>
</dbReference>
<dbReference type="PROSITE" id="PS50862">
    <property type="entry name" value="AA_TRNA_LIGASE_II"/>
    <property type="match status" value="1"/>
</dbReference>
<keyword id="KW-0002">3D-structure</keyword>
<keyword id="KW-0030">Aminoacyl-tRNA synthetase</keyword>
<keyword id="KW-0067">ATP-binding</keyword>
<keyword id="KW-0963">Cytoplasm</keyword>
<keyword id="KW-0436">Ligase</keyword>
<keyword id="KW-0547">Nucleotide-binding</keyword>
<keyword id="KW-0648">Protein biosynthesis</keyword>
<keyword id="KW-1185">Reference proteome</keyword>